<accession>Q760S6</accession>
<dbReference type="EMBL" id="AB118579">
    <property type="protein sequence ID" value="BAC84926.1"/>
    <property type="molecule type" value="Genomic_DNA"/>
</dbReference>
<dbReference type="RefSeq" id="YP_010925543.1">
    <property type="nucleotide sequence ID" value="NC_081972.1"/>
</dbReference>
<dbReference type="SMR" id="Q760S6"/>
<dbReference type="GeneID" id="84337904"/>
<dbReference type="GO" id="GO:0009507">
    <property type="term" value="C:chloroplast"/>
    <property type="evidence" value="ECO:0007669"/>
    <property type="project" value="UniProtKB-SubCell"/>
</dbReference>
<dbReference type="GO" id="GO:0016984">
    <property type="term" value="F:ribulose-bisphosphate carboxylase activity"/>
    <property type="evidence" value="ECO:0007669"/>
    <property type="project" value="UniProtKB-UniRule"/>
</dbReference>
<dbReference type="GO" id="GO:0019253">
    <property type="term" value="P:reductive pentose-phosphate cycle"/>
    <property type="evidence" value="ECO:0007669"/>
    <property type="project" value="UniProtKB-UniRule"/>
</dbReference>
<dbReference type="CDD" id="cd03527">
    <property type="entry name" value="RuBisCO_small"/>
    <property type="match status" value="1"/>
</dbReference>
<dbReference type="Gene3D" id="3.30.190.10">
    <property type="entry name" value="Ribulose bisphosphate carboxylase, small subunit"/>
    <property type="match status" value="1"/>
</dbReference>
<dbReference type="HAMAP" id="MF_00859">
    <property type="entry name" value="RuBisCO_S_bact"/>
    <property type="match status" value="1"/>
</dbReference>
<dbReference type="InterPro" id="IPR024681">
    <property type="entry name" value="RuBisCO_ssu"/>
</dbReference>
<dbReference type="InterPro" id="IPR000894">
    <property type="entry name" value="RuBisCO_ssu_dom"/>
</dbReference>
<dbReference type="InterPro" id="IPR036385">
    <property type="entry name" value="RuBisCO_ssu_sf"/>
</dbReference>
<dbReference type="PANTHER" id="PTHR31262">
    <property type="entry name" value="RIBULOSE BISPHOSPHATE CARBOXYLASE SMALL CHAIN 1, CHLOROPLASTIC"/>
    <property type="match status" value="1"/>
</dbReference>
<dbReference type="PANTHER" id="PTHR31262:SF23">
    <property type="entry name" value="RIBULOSE BISPHOSPHATE CARBOXYLASE SMALL SUBUNIT"/>
    <property type="match status" value="1"/>
</dbReference>
<dbReference type="Pfam" id="PF00101">
    <property type="entry name" value="RuBisCO_small"/>
    <property type="match status" value="1"/>
</dbReference>
<dbReference type="SMART" id="SM00961">
    <property type="entry name" value="RuBisCO_small"/>
    <property type="match status" value="1"/>
</dbReference>
<dbReference type="SUPFAM" id="SSF55239">
    <property type="entry name" value="RuBisCO, small subunit"/>
    <property type="match status" value="1"/>
</dbReference>
<gene>
    <name evidence="1" type="primary">rbcS</name>
</gene>
<reference key="1">
    <citation type="submission" date="2003-08" db="EMBL/GenBank/DDBJ databases">
        <title>Species determination utilizing Porphyra (Rhodophyta) plastid DNA RuBisCo sequences.</title>
        <authorList>
            <person name="Kito H."/>
            <person name="Kunimoto M."/>
            <person name="Mizukami Y."/>
            <person name="Murase N."/>
            <person name="Kuroki T."/>
            <person name="Taruta M."/>
            <person name="Levine I."/>
        </authorList>
    </citation>
    <scope>NUCLEOTIDE SEQUENCE [GENOMIC DNA]</scope>
    <source>
        <tissue>Thallus</tissue>
    </source>
</reference>
<geneLocation type="chloroplast"/>
<keyword id="KW-0113">Calvin cycle</keyword>
<keyword id="KW-0120">Carbon dioxide fixation</keyword>
<keyword id="KW-0150">Chloroplast</keyword>
<keyword id="KW-0601">Photorespiration</keyword>
<keyword id="KW-0602">Photosynthesis</keyword>
<keyword id="KW-0934">Plastid</keyword>
<comment type="function">
    <text evidence="1">RuBisCO catalyzes two reactions: the carboxylation of D-ribulose 1,5-bisphosphate, the primary event in carbon dioxide fixation, as well as the oxidative fragmentation of the pentose substrate in the photorespiration process. Both reactions occur simultaneously and in competition at the same active site. Although the small subunit is not catalytic it is essential for maximal activity.</text>
</comment>
<comment type="subunit">
    <text evidence="1">Heterohexadecamer of 8 large and 8 small subunits.</text>
</comment>
<comment type="subcellular location">
    <subcellularLocation>
        <location evidence="1">Plastid</location>
        <location evidence="1">Chloroplast</location>
    </subcellularLocation>
</comment>
<comment type="miscellaneous">
    <text>In this alga, in contrast to plants, the small subunit is encoded in the chloroplast.</text>
</comment>
<comment type="miscellaneous">
    <text evidence="1">The basic functional RuBisCO is composed of a large chain homodimer in a 'head-to-tail' conformation. In form I RuBisCO this homodimer is arranged in a barrel-like tetramer with the small subunits forming a tetrameric 'cap' on each end of the 'barrel'.</text>
</comment>
<comment type="similarity">
    <text evidence="1">Belongs to the RuBisCO small chain family.</text>
</comment>
<evidence type="ECO:0000255" key="1">
    <source>
        <dbReference type="HAMAP-Rule" id="MF_00859"/>
    </source>
</evidence>
<organism>
    <name type="scientific">Pyropia dentata</name>
    <name type="common">Red alga</name>
    <name type="synonym">Neoporphyra dentata</name>
    <dbReference type="NCBI Taxonomy" id="76160"/>
    <lineage>
        <taxon>Eukaryota</taxon>
        <taxon>Rhodophyta</taxon>
        <taxon>Bangiophyceae</taxon>
        <taxon>Bangiales</taxon>
        <taxon>Bangiaceae</taxon>
        <taxon>Pyropia</taxon>
    </lineage>
</organism>
<protein>
    <recommendedName>
        <fullName evidence="1">Ribulose bisphosphate carboxylase small subunit</fullName>
        <shortName evidence="1">RuBisCO small subunit</shortName>
    </recommendedName>
</protein>
<feature type="chain" id="PRO_0000277430" description="Ribulose bisphosphate carboxylase small subunit">
    <location>
        <begin position="1"/>
        <end position="138"/>
    </location>
</feature>
<sequence>MRLTQGTFSFLPDLTDEQINKQLTYIVSKGLSANVEYTDDPHPRNSYWELWGLPLFDVKDASAVMYEISSCRKAKPNYYVKVNAFDNTRGIESCVMSFIVNRPANEPGFLLQRQDFEGRTMKYSLHSYATEKPEGARY</sequence>
<name>RBS_PYRDN</name>
<proteinExistence type="inferred from homology"/>